<organism>
    <name type="scientific">Proteus mirabilis (strain HI4320)</name>
    <dbReference type="NCBI Taxonomy" id="529507"/>
    <lineage>
        <taxon>Bacteria</taxon>
        <taxon>Pseudomonadati</taxon>
        <taxon>Pseudomonadota</taxon>
        <taxon>Gammaproteobacteria</taxon>
        <taxon>Enterobacterales</taxon>
        <taxon>Morganellaceae</taxon>
        <taxon>Proteus</taxon>
    </lineage>
</organism>
<comment type="function">
    <text evidence="1">Facilitates the functional incorporation of the urease nickel metallocenter. This process requires GTP hydrolysis, probably effectuated by UreG.</text>
</comment>
<comment type="subunit">
    <text evidence="1">Homodimer. UreD, UreF and UreG form a complex that acts as a GTP-hydrolysis-dependent molecular chaperone, activating the urease apoprotein by helping to assemble the nickel containing metallocenter of UreC. The UreE protein probably delivers the nickel.</text>
</comment>
<comment type="subcellular location">
    <subcellularLocation>
        <location evidence="1">Cytoplasm</location>
    </subcellularLocation>
</comment>
<comment type="similarity">
    <text evidence="1">Belongs to the SIMIBI class G3E GTPase family. UreG subfamily.</text>
</comment>
<sequence length="205" mass="22301">MQEYNQPLRIGVGGPVGSGKTALLEVLCKAMRDSYQIAVVTNDIYTQEDAKILTRAQALDADRIIGVETGGCPHTAIREDASMNLAAVEELAMRHKNLDIVFVESGGDNLSATFSPELADLTIYVIDVAEGEKIPRKGGPGITHSDLLVINKIDLAPYVGASLEVMEADTAKMRPVKPYVFTNLKEKVGLETIIDFIIDKGMLRR</sequence>
<feature type="chain" id="PRO_0000067671" description="Urease accessory protein UreG">
    <location>
        <begin position="1"/>
        <end position="205"/>
    </location>
</feature>
<feature type="binding site" evidence="1">
    <location>
        <begin position="14"/>
        <end position="21"/>
    </location>
    <ligand>
        <name>GTP</name>
        <dbReference type="ChEBI" id="CHEBI:37565"/>
    </ligand>
</feature>
<feature type="mutagenesis site" description="Abrogates activity." evidence="2">
    <original>I</original>
    <variation>IRRRI</variation>
    <location>
        <position position="134"/>
    </location>
</feature>
<feature type="sequence conflict" description="In Ref. 1; CAA79934." evidence="3" ref="1">
    <original>TIYV</original>
    <variation>LFML</variation>
    <location>
        <begin position="122"/>
        <end position="125"/>
    </location>
</feature>
<feature type="sequence conflict" description="In Ref. 1; CAA79934." evidence="3" ref="1">
    <original>SDLL</original>
    <variation>PDMM</variation>
    <location>
        <begin position="145"/>
        <end position="148"/>
    </location>
</feature>
<dbReference type="EMBL" id="Z21940">
    <property type="protein sequence ID" value="CAA79934.1"/>
    <property type="molecule type" value="Genomic_DNA"/>
</dbReference>
<dbReference type="EMBL" id="AM942759">
    <property type="protein sequence ID" value="CAR47190.1"/>
    <property type="molecule type" value="Genomic_DNA"/>
</dbReference>
<dbReference type="PIR" id="JN0755">
    <property type="entry name" value="JN0755"/>
</dbReference>
<dbReference type="RefSeq" id="WP_004245259.1">
    <property type="nucleotide sequence ID" value="NC_010554.1"/>
</dbReference>
<dbReference type="SMR" id="Q06206"/>
<dbReference type="EnsemblBacteria" id="CAR47190">
    <property type="protein sequence ID" value="CAR47190"/>
    <property type="gene ID" value="PMI3688"/>
</dbReference>
<dbReference type="GeneID" id="6801998"/>
<dbReference type="KEGG" id="pmr:PMI3688"/>
<dbReference type="eggNOG" id="COG0378">
    <property type="taxonomic scope" value="Bacteria"/>
</dbReference>
<dbReference type="HOGENOM" id="CLU_072144_1_0_6"/>
<dbReference type="Proteomes" id="UP000008319">
    <property type="component" value="Chromosome"/>
</dbReference>
<dbReference type="GO" id="GO:0005737">
    <property type="term" value="C:cytoplasm"/>
    <property type="evidence" value="ECO:0007669"/>
    <property type="project" value="UniProtKB-SubCell"/>
</dbReference>
<dbReference type="GO" id="GO:0005525">
    <property type="term" value="F:GTP binding"/>
    <property type="evidence" value="ECO:0007669"/>
    <property type="project" value="UniProtKB-KW"/>
</dbReference>
<dbReference type="GO" id="GO:0003924">
    <property type="term" value="F:GTPase activity"/>
    <property type="evidence" value="ECO:0007669"/>
    <property type="project" value="InterPro"/>
</dbReference>
<dbReference type="GO" id="GO:0016151">
    <property type="term" value="F:nickel cation binding"/>
    <property type="evidence" value="ECO:0007669"/>
    <property type="project" value="UniProtKB-UniRule"/>
</dbReference>
<dbReference type="GO" id="GO:0043419">
    <property type="term" value="P:urea catabolic process"/>
    <property type="evidence" value="ECO:0007669"/>
    <property type="project" value="InterPro"/>
</dbReference>
<dbReference type="CDD" id="cd05540">
    <property type="entry name" value="UreG"/>
    <property type="match status" value="1"/>
</dbReference>
<dbReference type="FunFam" id="3.40.50.300:FF:000208">
    <property type="entry name" value="Urease accessory protein UreG"/>
    <property type="match status" value="1"/>
</dbReference>
<dbReference type="Gene3D" id="3.40.50.300">
    <property type="entry name" value="P-loop containing nucleotide triphosphate hydrolases"/>
    <property type="match status" value="1"/>
</dbReference>
<dbReference type="HAMAP" id="MF_01389">
    <property type="entry name" value="UreG"/>
    <property type="match status" value="1"/>
</dbReference>
<dbReference type="InterPro" id="IPR003495">
    <property type="entry name" value="CobW/HypB/UreG_nucleotide-bd"/>
</dbReference>
<dbReference type="InterPro" id="IPR027417">
    <property type="entry name" value="P-loop_NTPase"/>
</dbReference>
<dbReference type="InterPro" id="IPR004400">
    <property type="entry name" value="UreG"/>
</dbReference>
<dbReference type="NCBIfam" id="TIGR00101">
    <property type="entry name" value="ureG"/>
    <property type="match status" value="1"/>
</dbReference>
<dbReference type="PANTHER" id="PTHR31715">
    <property type="entry name" value="UREASE ACCESSORY PROTEIN G"/>
    <property type="match status" value="1"/>
</dbReference>
<dbReference type="PANTHER" id="PTHR31715:SF0">
    <property type="entry name" value="UREASE ACCESSORY PROTEIN G"/>
    <property type="match status" value="1"/>
</dbReference>
<dbReference type="Pfam" id="PF02492">
    <property type="entry name" value="cobW"/>
    <property type="match status" value="1"/>
</dbReference>
<dbReference type="PIRSF" id="PIRSF005624">
    <property type="entry name" value="Ni-bind_GTPase"/>
    <property type="match status" value="1"/>
</dbReference>
<dbReference type="SUPFAM" id="SSF52540">
    <property type="entry name" value="P-loop containing nucleoside triphosphate hydrolases"/>
    <property type="match status" value="1"/>
</dbReference>
<gene>
    <name evidence="1" type="primary">ureG</name>
    <name type="ordered locus">PMI3688</name>
</gene>
<evidence type="ECO:0000255" key="1">
    <source>
        <dbReference type="HAMAP-Rule" id="MF_01389"/>
    </source>
</evidence>
<evidence type="ECO:0000269" key="2">
    <source>
    </source>
</evidence>
<evidence type="ECO:0000305" key="3"/>
<accession>Q06206</accession>
<accession>B4EXN8</accession>
<protein>
    <recommendedName>
        <fullName evidence="1">Urease accessory protein UreG</fullName>
    </recommendedName>
</protein>
<name>UREG_PROMH</name>
<reference key="1">
    <citation type="journal article" date="1993" name="Gene">
        <title>Sequence of the Proteus mirabilis urease accessory gene ureG.</title>
        <authorList>
            <person name="Sriwanthana B."/>
            <person name="Island M.D."/>
            <person name="Mobley H.L.T."/>
        </authorList>
    </citation>
    <scope>NUCLEOTIDE SEQUENCE [GENOMIC DNA]</scope>
</reference>
<reference key="2">
    <citation type="journal article" date="2008" name="J. Bacteriol.">
        <title>Complete genome sequence of uropathogenic Proteus mirabilis, a master of both adherence and motility.</title>
        <authorList>
            <person name="Pearson M.M."/>
            <person name="Sebaihia M."/>
            <person name="Churcher C."/>
            <person name="Quail M.A."/>
            <person name="Seshasayee A.S."/>
            <person name="Luscombe N.M."/>
            <person name="Abdellah Z."/>
            <person name="Arrosmith C."/>
            <person name="Atkin B."/>
            <person name="Chillingworth T."/>
            <person name="Hauser H."/>
            <person name="Jagels K."/>
            <person name="Moule S."/>
            <person name="Mungall K."/>
            <person name="Norbertczak H."/>
            <person name="Rabbinowitsch E."/>
            <person name="Walker D."/>
            <person name="Whithead S."/>
            <person name="Thomson N.R."/>
            <person name="Rather P.N."/>
            <person name="Parkhill J."/>
            <person name="Mobley H.L.T."/>
        </authorList>
    </citation>
    <scope>NUCLEOTIDE SEQUENCE [LARGE SCALE GENOMIC DNA]</scope>
    <source>
        <strain>HI4320</strain>
    </source>
</reference>
<reference key="3">
    <citation type="journal article" date="1990" name="Infect. Immun.">
        <title>Construction of a urease-negative mutant of Proteus mirabilis: analysis of virulence in a mouse model of ascending urinary tract infection.</title>
        <authorList>
            <person name="Jones B.D."/>
            <person name="Lockatell C.V."/>
            <person name="Johnson D.E."/>
            <person name="Warren J.W."/>
            <person name="Mobley H.L.T."/>
        </authorList>
    </citation>
    <scope>UREASE AS A VIRULENCE FACTOR</scope>
</reference>
<reference key="4">
    <citation type="journal article" date="1995" name="J. Bacteriol.">
        <title>Proteus mirabilis urease: operon fusion and linker insertion analysis of ure gene organization, regulation, and function.</title>
        <authorList>
            <person name="Island M.D."/>
            <person name="Mobley H.L.T."/>
        </authorList>
    </citation>
    <scope>PROBABLE OPERON STRUCTURE</scope>
    <scope>MUTAGENESIS OF ILE-134</scope>
</reference>
<keyword id="KW-0143">Chaperone</keyword>
<keyword id="KW-0963">Cytoplasm</keyword>
<keyword id="KW-0342">GTP-binding</keyword>
<keyword id="KW-0996">Nickel insertion</keyword>
<keyword id="KW-0547">Nucleotide-binding</keyword>
<keyword id="KW-1185">Reference proteome</keyword>
<keyword id="KW-0843">Virulence</keyword>
<proteinExistence type="evidence at protein level"/>